<gene>
    <name evidence="1" type="primary">ABHD12</name>
</gene>
<feature type="chain" id="PRO_0000375807" description="Lysophosphatidylserine lipase ABHD12">
    <location>
        <begin position="1"/>
        <end position="398"/>
    </location>
</feature>
<feature type="topological domain" description="Cytoplasmic" evidence="2">
    <location>
        <begin position="1"/>
        <end position="74"/>
    </location>
</feature>
<feature type="transmembrane region" description="Helical" evidence="2">
    <location>
        <begin position="75"/>
        <end position="95"/>
    </location>
</feature>
<feature type="topological domain" description="Extracellular" evidence="2">
    <location>
        <begin position="96"/>
        <end position="398"/>
    </location>
</feature>
<feature type="region of interest" description="Disordered" evidence="4">
    <location>
        <begin position="1"/>
        <end position="24"/>
    </location>
</feature>
<feature type="compositionally biased region" description="Basic and acidic residues" evidence="4">
    <location>
        <begin position="1"/>
        <end position="16"/>
    </location>
</feature>
<feature type="active site" description="Nucleophile" evidence="1">
    <location>
        <position position="246"/>
    </location>
</feature>
<feature type="active site" description="Charge relay system" evidence="1">
    <location>
        <position position="333"/>
    </location>
</feature>
<feature type="active site" description="Charge relay system" evidence="1">
    <location>
        <position position="372"/>
    </location>
</feature>
<feature type="glycosylation site" description="N-linked (GlcNAc...) asparagine" evidence="3">
    <location>
        <position position="123"/>
    </location>
</feature>
<keyword id="KW-0256">Endoplasmic reticulum</keyword>
<keyword id="KW-0325">Glycoprotein</keyword>
<keyword id="KW-0378">Hydrolase</keyword>
<keyword id="KW-0443">Lipid metabolism</keyword>
<keyword id="KW-0472">Membrane</keyword>
<keyword id="KW-1185">Reference proteome</keyword>
<keyword id="KW-0812">Transmembrane</keyword>
<keyword id="KW-1133">Transmembrane helix</keyword>
<comment type="function">
    <text evidence="1 2">Lysophosphatidylserine (LPS) lipase that mediates the hydrolysis of lysophosphatidylserine, a class of signaling lipids that regulates immunological and neurological processes (By similarity). Represents a major lysophosphatidylserine lipase in the brain, thereby playing a key role in the central nervous system (By similarity). Also able to hydrolyze oxidized phosphatidylserine; oxidized phosphatidylserine is produced in response to severe inflammatory stress and constitutes a proapoptotic 'eat me' signal. Also has monoacylglycerol (MAG) lipase activity: hydrolyzes 2-arachidonoylglycerol (2-AG), thereby acting as a regulator of endocannabinoid signaling pathways. Has a strong preference for very-long-chain lipid substrates; substrate specificity is likely due to improved catalysis and not improved substrate binding (By similarity).</text>
</comment>
<comment type="catalytic activity">
    <reaction evidence="1">
        <text>1-(9Z-octadecenoyl)-sn-glycero-3-phospho-L-serine + H2O = sn-glycero-3-phospho-L-serine + (9Z)-octadecenoate + H(+)</text>
        <dbReference type="Rhea" id="RHEA:40499"/>
        <dbReference type="ChEBI" id="CHEBI:15377"/>
        <dbReference type="ChEBI" id="CHEBI:15378"/>
        <dbReference type="ChEBI" id="CHEBI:30823"/>
        <dbReference type="ChEBI" id="CHEBI:64765"/>
        <dbReference type="ChEBI" id="CHEBI:74617"/>
    </reaction>
</comment>
<comment type="catalytic activity">
    <reaction evidence="2">
        <text>1-(9Z-octadecenoyl)-sn-glycero-3-phospho-(1'-sn-glycerol) + H2O = sn-glycero-3-phospho-(1'-sn-glycerol) + (9Z)-octadecenoate + H(+)</text>
        <dbReference type="Rhea" id="RHEA:44584"/>
        <dbReference type="ChEBI" id="CHEBI:15377"/>
        <dbReference type="ChEBI" id="CHEBI:15378"/>
        <dbReference type="ChEBI" id="CHEBI:30823"/>
        <dbReference type="ChEBI" id="CHEBI:64717"/>
        <dbReference type="ChEBI" id="CHEBI:72828"/>
    </reaction>
</comment>
<comment type="catalytic activity">
    <reaction evidence="2">
        <text>1-(9Z-octadecenoyl)-sn-glycero-3-phospho-(1D-myo-inositol) + H2O = sn-glycero-3-phospho-1D-myo-inositol + (9Z)-octadecenoate + H(+)</text>
        <dbReference type="Rhea" id="RHEA:44588"/>
        <dbReference type="ChEBI" id="CHEBI:15377"/>
        <dbReference type="ChEBI" id="CHEBI:15378"/>
        <dbReference type="ChEBI" id="CHEBI:30823"/>
        <dbReference type="ChEBI" id="CHEBI:58444"/>
        <dbReference type="ChEBI" id="CHEBI:78762"/>
    </reaction>
</comment>
<comment type="catalytic activity">
    <reaction evidence="2">
        <text>1-(9Z-octadecenoyl)-sn-glycero-3-phosphoethanolamine + H2O = sn-glycero-3-phosphoethanolamine + (9Z)-octadecenoate + H(+)</text>
        <dbReference type="Rhea" id="RHEA:40895"/>
        <dbReference type="ChEBI" id="CHEBI:15377"/>
        <dbReference type="ChEBI" id="CHEBI:15378"/>
        <dbReference type="ChEBI" id="CHEBI:30823"/>
        <dbReference type="ChEBI" id="CHEBI:74971"/>
        <dbReference type="ChEBI" id="CHEBI:143890"/>
    </reaction>
</comment>
<comment type="catalytic activity">
    <reaction evidence="2">
        <text>1-(9Z-octadecenoyl)-sn-glycero-3-phosphocholine + H2O = 1-(9Z-octadecenoyl)-sn-glycerol + phosphocholine + H(+)</text>
        <dbReference type="Rhea" id="RHEA:41091"/>
        <dbReference type="ChEBI" id="CHEBI:15377"/>
        <dbReference type="ChEBI" id="CHEBI:15378"/>
        <dbReference type="ChEBI" id="CHEBI:28610"/>
        <dbReference type="ChEBI" id="CHEBI:75757"/>
        <dbReference type="ChEBI" id="CHEBI:295975"/>
    </reaction>
</comment>
<comment type="catalytic activity">
    <reaction evidence="1">
        <text>2-(9Z-octadecenoyl)-glycerol + H2O = glycerol + (9Z)-octadecenoate + H(+)</text>
        <dbReference type="Rhea" id="RHEA:38491"/>
        <dbReference type="ChEBI" id="CHEBI:15377"/>
        <dbReference type="ChEBI" id="CHEBI:15378"/>
        <dbReference type="ChEBI" id="CHEBI:17754"/>
        <dbReference type="ChEBI" id="CHEBI:30823"/>
        <dbReference type="ChEBI" id="CHEBI:73990"/>
    </reaction>
</comment>
<comment type="catalytic activity">
    <reaction evidence="1">
        <text>1-hexadecanoyl-sn-glycero-3-phospho-L-serine + H2O = sn-glycero-3-phospho-L-serine + hexadecanoate + H(+)</text>
        <dbReference type="Rhea" id="RHEA:44552"/>
        <dbReference type="ChEBI" id="CHEBI:7896"/>
        <dbReference type="ChEBI" id="CHEBI:15377"/>
        <dbReference type="ChEBI" id="CHEBI:15378"/>
        <dbReference type="ChEBI" id="CHEBI:64765"/>
        <dbReference type="ChEBI" id="CHEBI:75020"/>
    </reaction>
</comment>
<comment type="catalytic activity">
    <reaction evidence="1">
        <text>2-(5Z,8Z,11Z,14Z-eicosatetraenoyl)-glycerol + H2O = glycerol + (5Z,8Z,11Z,14Z)-eicosatetraenoate + H(+)</text>
        <dbReference type="Rhea" id="RHEA:26132"/>
        <dbReference type="ChEBI" id="CHEBI:15377"/>
        <dbReference type="ChEBI" id="CHEBI:15378"/>
        <dbReference type="ChEBI" id="CHEBI:17754"/>
        <dbReference type="ChEBI" id="CHEBI:32395"/>
        <dbReference type="ChEBI" id="CHEBI:52392"/>
    </reaction>
</comment>
<comment type="catalytic activity">
    <reaction evidence="1">
        <text>Hydrolyzes glycerol monoesters of long-chain fatty acids.</text>
        <dbReference type="EC" id="3.1.1.23"/>
    </reaction>
</comment>
<comment type="catalytic activity">
    <reaction evidence="1">
        <text>1-decanoylglycerol + H2O = decanoate + glycerol + H(+)</text>
        <dbReference type="Rhea" id="RHEA:44320"/>
        <dbReference type="ChEBI" id="CHEBI:15377"/>
        <dbReference type="ChEBI" id="CHEBI:15378"/>
        <dbReference type="ChEBI" id="CHEBI:17754"/>
        <dbReference type="ChEBI" id="CHEBI:27689"/>
        <dbReference type="ChEBI" id="CHEBI:75547"/>
    </reaction>
</comment>
<comment type="catalytic activity">
    <reaction evidence="1">
        <text>1-dodecanoylglycerol + H2O = dodecanoate + glycerol + H(+)</text>
        <dbReference type="Rhea" id="RHEA:44316"/>
        <dbReference type="ChEBI" id="CHEBI:15377"/>
        <dbReference type="ChEBI" id="CHEBI:15378"/>
        <dbReference type="ChEBI" id="CHEBI:17754"/>
        <dbReference type="ChEBI" id="CHEBI:18262"/>
        <dbReference type="ChEBI" id="CHEBI:75539"/>
    </reaction>
</comment>
<comment type="catalytic activity">
    <reaction evidence="1">
        <text>1-tetradecanoylglycerol + H2O = tetradecanoate + glycerol + H(+)</text>
        <dbReference type="Rhea" id="RHEA:44312"/>
        <dbReference type="ChEBI" id="CHEBI:15377"/>
        <dbReference type="ChEBI" id="CHEBI:15378"/>
        <dbReference type="ChEBI" id="CHEBI:17754"/>
        <dbReference type="ChEBI" id="CHEBI:30807"/>
        <dbReference type="ChEBI" id="CHEBI:75562"/>
    </reaction>
</comment>
<comment type="catalytic activity">
    <reaction evidence="1">
        <text>2-hexadecanoylglycerol + H2O = glycerol + hexadecanoate + H(+)</text>
        <dbReference type="Rhea" id="RHEA:39963"/>
        <dbReference type="ChEBI" id="CHEBI:7896"/>
        <dbReference type="ChEBI" id="CHEBI:15377"/>
        <dbReference type="ChEBI" id="CHEBI:15378"/>
        <dbReference type="ChEBI" id="CHEBI:17754"/>
        <dbReference type="ChEBI" id="CHEBI:75455"/>
    </reaction>
</comment>
<comment type="catalytic activity">
    <reaction evidence="1">
        <text>1-(9Z-octadecenoyl)-glycerol + H2O = glycerol + (9Z)-octadecenoate + H(+)</text>
        <dbReference type="Rhea" id="RHEA:38487"/>
        <dbReference type="ChEBI" id="CHEBI:15377"/>
        <dbReference type="ChEBI" id="CHEBI:15378"/>
        <dbReference type="ChEBI" id="CHEBI:17754"/>
        <dbReference type="ChEBI" id="CHEBI:30823"/>
        <dbReference type="ChEBI" id="CHEBI:75342"/>
    </reaction>
</comment>
<comment type="catalytic activity">
    <reaction evidence="1">
        <text>2-(9Z,12Z-octadecadienoyl)-glycerol + H2O = (9Z,12Z)-octadecadienoate + glycerol + H(+)</text>
        <dbReference type="Rhea" id="RHEA:44732"/>
        <dbReference type="ChEBI" id="CHEBI:15377"/>
        <dbReference type="ChEBI" id="CHEBI:15378"/>
        <dbReference type="ChEBI" id="CHEBI:17754"/>
        <dbReference type="ChEBI" id="CHEBI:30245"/>
        <dbReference type="ChEBI" id="CHEBI:75457"/>
    </reaction>
</comment>
<comment type="catalytic activity">
    <reaction evidence="1">
        <text>1-(5Z,8Z,11Z,14Z-eicosatetraenoyl)-glycerol + H2O = glycerol + (5Z,8Z,11Z,14Z)-eicosatetraenoate + H(+)</text>
        <dbReference type="Rhea" id="RHEA:44728"/>
        <dbReference type="ChEBI" id="CHEBI:15377"/>
        <dbReference type="ChEBI" id="CHEBI:15378"/>
        <dbReference type="ChEBI" id="CHEBI:17754"/>
        <dbReference type="ChEBI" id="CHEBI:32395"/>
        <dbReference type="ChEBI" id="CHEBI:75612"/>
    </reaction>
</comment>
<comment type="catalytic activity">
    <reaction evidence="1">
        <text>1-(9Z,12Z-octadecadienoyl)-glycerol + H2O = (9Z,12Z)-octadecadienoate + glycerol + H(+)</text>
        <dbReference type="Rhea" id="RHEA:48428"/>
        <dbReference type="ChEBI" id="CHEBI:15377"/>
        <dbReference type="ChEBI" id="CHEBI:15378"/>
        <dbReference type="ChEBI" id="CHEBI:17754"/>
        <dbReference type="ChEBI" id="CHEBI:30245"/>
        <dbReference type="ChEBI" id="CHEBI:75568"/>
    </reaction>
</comment>
<comment type="catalytic activity">
    <reaction evidence="1">
        <text>1-hexadecanoylglycerol + H2O = glycerol + hexadecanoate + H(+)</text>
        <dbReference type="Rhea" id="RHEA:39959"/>
        <dbReference type="ChEBI" id="CHEBI:7896"/>
        <dbReference type="ChEBI" id="CHEBI:15377"/>
        <dbReference type="ChEBI" id="CHEBI:15378"/>
        <dbReference type="ChEBI" id="CHEBI:17754"/>
        <dbReference type="ChEBI" id="CHEBI:69081"/>
    </reaction>
</comment>
<comment type="catalytic activity">
    <reaction evidence="1">
        <text>1-octadecanoylglycerol + H2O = octadecanoate + glycerol + H(+)</text>
        <dbReference type="Rhea" id="RHEA:38363"/>
        <dbReference type="ChEBI" id="CHEBI:15377"/>
        <dbReference type="ChEBI" id="CHEBI:15378"/>
        <dbReference type="ChEBI" id="CHEBI:17754"/>
        <dbReference type="ChEBI" id="CHEBI:25629"/>
        <dbReference type="ChEBI" id="CHEBI:75555"/>
    </reaction>
</comment>
<comment type="catalytic activity">
    <reaction evidence="1">
        <text>1-octadecanoyl-2-(9,10-epoxyoctadecanoyl)-sn-glycero-3-phospho-L-serine + H2O = 9,10-epoxyoctadecanoate + 1-octadecanoyl-sn-glycero-3-phosphoserine + H(+)</text>
        <dbReference type="Rhea" id="RHEA:59364"/>
        <dbReference type="ChEBI" id="CHEBI:15377"/>
        <dbReference type="ChEBI" id="CHEBI:15378"/>
        <dbReference type="ChEBI" id="CHEBI:84467"/>
        <dbReference type="ChEBI" id="CHEBI:85195"/>
        <dbReference type="ChEBI" id="CHEBI:143087"/>
    </reaction>
</comment>
<comment type="catalytic activity">
    <reaction evidence="1">
        <text>1-octadecanoyl-2-(10-hydroxyoctadecanoyl)-sn-glycero-3-phospho-L-serine + H2O = 1-octadecanoyl-sn-glycero-3-phosphoserine + 10-hydroxyoctadecanoate + H(+)</text>
        <dbReference type="Rhea" id="RHEA:59368"/>
        <dbReference type="ChEBI" id="CHEBI:15377"/>
        <dbReference type="ChEBI" id="CHEBI:15378"/>
        <dbReference type="ChEBI" id="CHEBI:84467"/>
        <dbReference type="ChEBI" id="CHEBI:143088"/>
        <dbReference type="ChEBI" id="CHEBI:143089"/>
    </reaction>
</comment>
<comment type="catalytic activity">
    <reaction evidence="1">
        <text>1-hexadecanoyl-2-(10-hydroxyoctadecanoyl)-sn-glycero-3-phospho-L-serine + H2O = 10-hydroxyoctadecanoate + 1-hexadecanoyl-sn-glycero-3-phospho-L-serine + H(+)</text>
        <dbReference type="Rhea" id="RHEA:59372"/>
        <dbReference type="ChEBI" id="CHEBI:15377"/>
        <dbReference type="ChEBI" id="CHEBI:15378"/>
        <dbReference type="ChEBI" id="CHEBI:75020"/>
        <dbReference type="ChEBI" id="CHEBI:143089"/>
        <dbReference type="ChEBI" id="CHEBI:143094"/>
    </reaction>
</comment>
<comment type="subcellular location">
    <subcellularLocation>
        <location evidence="1">Endoplasmic reticulum membrane</location>
        <topology evidence="3">Single-pass membrane protein</topology>
    </subcellularLocation>
</comment>
<comment type="similarity">
    <text evidence="5">Belongs to the serine esterase family.</text>
</comment>
<reference key="1">
    <citation type="submission" date="2006-09" db="EMBL/GenBank/DDBJ databases">
        <authorList>
            <consortium name="NIH - Mammalian Gene Collection (MGC) project"/>
        </authorList>
    </citation>
    <scope>NUCLEOTIDE SEQUENCE [LARGE SCALE MRNA]</scope>
    <source>
        <strain>Hereford</strain>
        <tissue>Fetal cerebellum</tissue>
    </source>
</reference>
<organism>
    <name type="scientific">Bos taurus</name>
    <name type="common">Bovine</name>
    <dbReference type="NCBI Taxonomy" id="9913"/>
    <lineage>
        <taxon>Eukaryota</taxon>
        <taxon>Metazoa</taxon>
        <taxon>Chordata</taxon>
        <taxon>Craniata</taxon>
        <taxon>Vertebrata</taxon>
        <taxon>Euteleostomi</taxon>
        <taxon>Mammalia</taxon>
        <taxon>Eutheria</taxon>
        <taxon>Laurasiatheria</taxon>
        <taxon>Artiodactyla</taxon>
        <taxon>Ruminantia</taxon>
        <taxon>Pecora</taxon>
        <taxon>Bovidae</taxon>
        <taxon>Bovinae</taxon>
        <taxon>Bos</taxon>
    </lineage>
</organism>
<accession>Q08DW9</accession>
<sequence length="398" mass="45220">MRKRTEPVALEHERRTASGSPSAGPAAAALDADCRLKQNLCLAGPGPAEPRCAADAGMKRALGRRKGLCFRLRKILFFVLGLYVAIPFLIKLCPGIQAKLIFLNFVRVPYFIDLKRPQDQGLNHTCNYYLQPEEDVTIGVWHTVPTVWWKNAQGKDQMWYEDALSSSHPIILYLHGNAGTRGGDHRVELYKVLSSLGYHVVTFDYRGWGDSVGTPSERGMTYDALHVFDWIKVRSGDNPVYIWGHSLGTGVATNLVRRLCERETPPDALILESPFTNIREEAKSHPFSVIYRYFPGFDWFFLDPITSSGIQFANDENVKHISCSLLILHAEDDPVVPFQLGRKLYNIAAPSRSFRDFKVQFIPFHSDLGYRHKYIYKSPELPRILREFLGKSEPGRQH</sequence>
<evidence type="ECO:0000250" key="1">
    <source>
        <dbReference type="UniProtKB" id="Q8N2K0"/>
    </source>
</evidence>
<evidence type="ECO:0000250" key="2">
    <source>
        <dbReference type="UniProtKB" id="Q99LR1"/>
    </source>
</evidence>
<evidence type="ECO:0000255" key="3"/>
<evidence type="ECO:0000256" key="4">
    <source>
        <dbReference type="SAM" id="MobiDB-lite"/>
    </source>
</evidence>
<evidence type="ECO:0000305" key="5"/>
<proteinExistence type="evidence at transcript level"/>
<dbReference type="EC" id="3.1.-.-" evidence="1"/>
<dbReference type="EC" id="3.1.1.23" evidence="1"/>
<dbReference type="EMBL" id="BC123534">
    <property type="protein sequence ID" value="AAI23535.1"/>
    <property type="molecule type" value="mRNA"/>
</dbReference>
<dbReference type="RefSeq" id="NP_001071584.1">
    <property type="nucleotide sequence ID" value="NM_001078116.1"/>
</dbReference>
<dbReference type="SMR" id="Q08DW9"/>
<dbReference type="FunCoup" id="Q08DW9">
    <property type="interactions" value="3056"/>
</dbReference>
<dbReference type="STRING" id="9913.ENSBTAP00000062684"/>
<dbReference type="ESTHER" id="bovin-q08dw9">
    <property type="family name" value="ABHD12-PHARC"/>
</dbReference>
<dbReference type="GlyCosmos" id="Q08DW9">
    <property type="glycosylation" value="1 site, No reported glycans"/>
</dbReference>
<dbReference type="GlyGen" id="Q08DW9">
    <property type="glycosylation" value="1 site"/>
</dbReference>
<dbReference type="SwissPalm" id="Q08DW9"/>
<dbReference type="PaxDb" id="9913-ENSBTAP00000001863"/>
<dbReference type="GeneID" id="768242"/>
<dbReference type="KEGG" id="bta:768242"/>
<dbReference type="CTD" id="26090"/>
<dbReference type="VEuPathDB" id="HostDB:ENSBTAG00000001420"/>
<dbReference type="eggNOG" id="KOG1552">
    <property type="taxonomic scope" value="Eukaryota"/>
</dbReference>
<dbReference type="HOGENOM" id="CLU_029375_1_0_1"/>
<dbReference type="InParanoid" id="Q08DW9"/>
<dbReference type="OMA" id="YELHNCL"/>
<dbReference type="OrthoDB" id="10249433at2759"/>
<dbReference type="TreeFam" id="TF315122"/>
<dbReference type="Reactome" id="R-BTA-426048">
    <property type="pathway name" value="Arachidonate production from DAG"/>
</dbReference>
<dbReference type="Proteomes" id="UP000009136">
    <property type="component" value="Chromosome 13"/>
</dbReference>
<dbReference type="Bgee" id="ENSBTAG00000001420">
    <property type="expression patterns" value="Expressed in digestive system secreted substance and 103 other cell types or tissues"/>
</dbReference>
<dbReference type="GO" id="GO:0005789">
    <property type="term" value="C:endoplasmic reticulum membrane"/>
    <property type="evidence" value="ECO:0000250"/>
    <property type="project" value="UniProtKB"/>
</dbReference>
<dbReference type="GO" id="GO:0016020">
    <property type="term" value="C:membrane"/>
    <property type="evidence" value="ECO:0000250"/>
    <property type="project" value="UniProtKB"/>
</dbReference>
<dbReference type="GO" id="GO:0004622">
    <property type="term" value="F:lysophospholipase activity"/>
    <property type="evidence" value="ECO:0000250"/>
    <property type="project" value="UniProtKB"/>
</dbReference>
<dbReference type="GO" id="GO:0047372">
    <property type="term" value="F:monoacylglycerol lipase activity"/>
    <property type="evidence" value="ECO:0000250"/>
    <property type="project" value="UniProtKB"/>
</dbReference>
<dbReference type="GO" id="GO:0004620">
    <property type="term" value="F:phospholipase activity"/>
    <property type="evidence" value="ECO:0000250"/>
    <property type="project" value="UniProtKB"/>
</dbReference>
<dbReference type="GO" id="GO:0046464">
    <property type="term" value="P:acylglycerol catabolic process"/>
    <property type="evidence" value="ECO:0000250"/>
    <property type="project" value="UniProtKB"/>
</dbReference>
<dbReference type="GO" id="GO:0052651">
    <property type="term" value="P:monoacylglycerol catabolic process"/>
    <property type="evidence" value="ECO:0000250"/>
    <property type="project" value="UniProtKB"/>
</dbReference>
<dbReference type="GO" id="GO:0006660">
    <property type="term" value="P:phosphatidylserine catabolic process"/>
    <property type="evidence" value="ECO:0000250"/>
    <property type="project" value="UniProtKB"/>
</dbReference>
<dbReference type="GO" id="GO:0009395">
    <property type="term" value="P:phospholipid catabolic process"/>
    <property type="evidence" value="ECO:0000250"/>
    <property type="project" value="UniProtKB"/>
</dbReference>
<dbReference type="FunFam" id="3.40.50.1820:FF:000069">
    <property type="entry name" value="monoacylglycerol lipase ABHD12"/>
    <property type="match status" value="1"/>
</dbReference>
<dbReference type="Gene3D" id="3.40.50.1820">
    <property type="entry name" value="alpha/beta hydrolase"/>
    <property type="match status" value="1"/>
</dbReference>
<dbReference type="InterPro" id="IPR000073">
    <property type="entry name" value="AB_hydrolase_1"/>
</dbReference>
<dbReference type="InterPro" id="IPR029058">
    <property type="entry name" value="AB_hydrolase_fold"/>
</dbReference>
<dbReference type="PANTHER" id="PTHR12277">
    <property type="entry name" value="ALPHA/BETA HYDROLASE DOMAIN-CONTAINING PROTEIN"/>
    <property type="match status" value="1"/>
</dbReference>
<dbReference type="PANTHER" id="PTHR12277:SF61">
    <property type="entry name" value="LYSOPHOSPHATIDYLSERINE LIPASE ABHD12"/>
    <property type="match status" value="1"/>
</dbReference>
<dbReference type="Pfam" id="PF00561">
    <property type="entry name" value="Abhydrolase_1"/>
    <property type="match status" value="1"/>
</dbReference>
<dbReference type="SUPFAM" id="SSF53474">
    <property type="entry name" value="alpha/beta-Hydrolases"/>
    <property type="match status" value="1"/>
</dbReference>
<protein>
    <recommendedName>
        <fullName evidence="5">Lysophosphatidylserine lipase ABHD12</fullName>
        <ecNumber evidence="1">3.1.-.-</ecNumber>
    </recommendedName>
    <alternativeName>
        <fullName evidence="5">2-arachidonoylglycerol hydrolase ABHD12</fullName>
    </alternativeName>
    <alternativeName>
        <fullName evidence="5">Abhydrolase domain-containing protein 12</fullName>
    </alternativeName>
    <alternativeName>
        <fullName evidence="5">Monoacylglycerol lipase ABHD12</fullName>
        <ecNumber evidence="1">3.1.1.23</ecNumber>
    </alternativeName>
    <alternativeName>
        <fullName evidence="5">Oxidized phosphatidylserine lipase ABHD12</fullName>
        <ecNumber evidence="1">3.1.-.-</ecNumber>
    </alternativeName>
</protein>
<name>ABD12_BOVIN</name>